<accession>P0CS56</accession>
<accession>Q55MZ1</accession>
<accession>Q5KBC0</accession>
<protein>
    <recommendedName>
        <fullName evidence="1">DNA damage-binding protein CMR1</fullName>
    </recommendedName>
</protein>
<organism>
    <name type="scientific">Cryptococcus neoformans var. neoformans serotype D (strain JEC21 / ATCC MYA-565)</name>
    <name type="common">Filobasidiella neoformans</name>
    <dbReference type="NCBI Taxonomy" id="214684"/>
    <lineage>
        <taxon>Eukaryota</taxon>
        <taxon>Fungi</taxon>
        <taxon>Dikarya</taxon>
        <taxon>Basidiomycota</taxon>
        <taxon>Agaricomycotina</taxon>
        <taxon>Tremellomycetes</taxon>
        <taxon>Tremellales</taxon>
        <taxon>Cryptococcaceae</taxon>
        <taxon>Cryptococcus</taxon>
        <taxon>Cryptococcus neoformans species complex</taxon>
    </lineage>
</organism>
<feature type="chain" id="PRO_0000351106" description="DNA damage-binding protein CMR1">
    <location>
        <begin position="1"/>
        <end position="595"/>
    </location>
</feature>
<feature type="repeat" description="WD 1" evidence="2">
    <location>
        <begin position="185"/>
        <end position="226"/>
    </location>
</feature>
<feature type="repeat" description="WD 2" evidence="2">
    <location>
        <begin position="255"/>
        <end position="297"/>
    </location>
</feature>
<feature type="repeat" description="WD 3" evidence="2">
    <location>
        <begin position="300"/>
        <end position="339"/>
    </location>
</feature>
<feature type="repeat" description="WD 4" evidence="2">
    <location>
        <begin position="349"/>
        <end position="389"/>
    </location>
</feature>
<feature type="repeat" description="WD 5" evidence="2">
    <location>
        <begin position="448"/>
        <end position="487"/>
    </location>
</feature>
<feature type="repeat" description="WD 6" evidence="2">
    <location>
        <begin position="519"/>
        <end position="556"/>
    </location>
</feature>
<feature type="repeat" description="WD 7" evidence="2">
    <location>
        <begin position="558"/>
        <end position="595"/>
    </location>
</feature>
<feature type="region of interest" description="Disordered" evidence="3">
    <location>
        <begin position="20"/>
        <end position="79"/>
    </location>
</feature>
<feature type="region of interest" description="Disordered" evidence="3">
    <location>
        <begin position="397"/>
        <end position="429"/>
    </location>
</feature>
<feature type="compositionally biased region" description="Low complexity" evidence="3">
    <location>
        <begin position="29"/>
        <end position="46"/>
    </location>
</feature>
<feature type="compositionally biased region" description="Basic residues" evidence="3">
    <location>
        <begin position="47"/>
        <end position="60"/>
    </location>
</feature>
<feature type="compositionally biased region" description="Low complexity" evidence="3">
    <location>
        <begin position="405"/>
        <end position="415"/>
    </location>
</feature>
<feature type="compositionally biased region" description="Basic and acidic residues" evidence="3">
    <location>
        <begin position="417"/>
        <end position="426"/>
    </location>
</feature>
<reference key="1">
    <citation type="journal article" date="2005" name="Science">
        <title>The genome of the basidiomycetous yeast and human pathogen Cryptococcus neoformans.</title>
        <authorList>
            <person name="Loftus B.J."/>
            <person name="Fung E."/>
            <person name="Roncaglia P."/>
            <person name="Rowley D."/>
            <person name="Amedeo P."/>
            <person name="Bruno D."/>
            <person name="Vamathevan J."/>
            <person name="Miranda M."/>
            <person name="Anderson I.J."/>
            <person name="Fraser J.A."/>
            <person name="Allen J.E."/>
            <person name="Bosdet I.E."/>
            <person name="Brent M.R."/>
            <person name="Chiu R."/>
            <person name="Doering T.L."/>
            <person name="Donlin M.J."/>
            <person name="D'Souza C.A."/>
            <person name="Fox D.S."/>
            <person name="Grinberg V."/>
            <person name="Fu J."/>
            <person name="Fukushima M."/>
            <person name="Haas B.J."/>
            <person name="Huang J.C."/>
            <person name="Janbon G."/>
            <person name="Jones S.J.M."/>
            <person name="Koo H.L."/>
            <person name="Krzywinski M.I."/>
            <person name="Kwon-Chung K.J."/>
            <person name="Lengeler K.B."/>
            <person name="Maiti R."/>
            <person name="Marra M.A."/>
            <person name="Marra R.E."/>
            <person name="Mathewson C.A."/>
            <person name="Mitchell T.G."/>
            <person name="Pertea M."/>
            <person name="Riggs F.R."/>
            <person name="Salzberg S.L."/>
            <person name="Schein J.E."/>
            <person name="Shvartsbeyn A."/>
            <person name="Shin H."/>
            <person name="Shumway M."/>
            <person name="Specht C.A."/>
            <person name="Suh B.B."/>
            <person name="Tenney A."/>
            <person name="Utterback T.R."/>
            <person name="Wickes B.L."/>
            <person name="Wortman J.R."/>
            <person name="Wye N.H."/>
            <person name="Kronstad J.W."/>
            <person name="Lodge J.K."/>
            <person name="Heitman J."/>
            <person name="Davis R.W."/>
            <person name="Fraser C.M."/>
            <person name="Hyman R.W."/>
        </authorList>
    </citation>
    <scope>NUCLEOTIDE SEQUENCE [LARGE SCALE GENOMIC DNA]</scope>
    <source>
        <strain>JEC21 / ATCC MYA-565</strain>
    </source>
</reference>
<proteinExistence type="inferred from homology"/>
<keyword id="KW-0227">DNA damage</keyword>
<keyword id="KW-0238">DNA-binding</keyword>
<keyword id="KW-1185">Reference proteome</keyword>
<keyword id="KW-0677">Repeat</keyword>
<keyword id="KW-0853">WD repeat</keyword>
<comment type="function">
    <text evidence="1">DNA-binding protein that binds to both single- and double-stranded DNA. Binds preferentially to UV-damaged DNA. May be involved in DNA-metabolic processes.</text>
</comment>
<comment type="similarity">
    <text evidence="4">Belongs to the WD repeat DDB2/WDR76 family.</text>
</comment>
<name>CMR1_CRYNJ</name>
<sequence length="595" mass="66035">MDEETAYELERQKTIAENRALLDSLGLDPAGASSPFGSSPAPTSNKTKPKPKPAPKKRKAAAVIAVDEGPRRRSGRIAGLEADGDAFKAKVEEEEKEREILRVVSRKEREKVMDVGKMVEDTPEDEIKDMEKYLQSIAELSNPRTYPAGTVSAREAYADSDTVPSEVQRLKDAFKDMSLKGNTKVTNERVFSMCVHPEKTKTLVLVGDKYGQLGIWDALGPPMEKPENEDDTSGLLRAEGEDEYQEGRVWRVQAHAKNSISCMKVDPVNGSGLFSTAYDCSLRHLSFSTLQSTELFSFQDEDLLINHFDLLPSAQEAWMVDKNGGISHWDTRESKRESGRRRWVVQEEGRGAKLGGVSVNPLMPHLICTAGNDQHVRIWDTRHLFSISSNLVPSAAAIEEEEEGTSTLSGQSSSLPHDTHPTRESDYSTVTSYLASPRGKGLMRAKWQHGKSCSSAYWDPWGRRILTTSYDDHLRVFNIDPGSSLVDDRAVGSLLQPNGFKPTKVVRHNCQTGRWLTILRAQWSLNMEYMPHFTVGNMKRTLDVVSATGEKIVGLWTDDVTAVPTVTASHPNIVDRVVGGNTSGRIQLWSSGDHI</sequence>
<dbReference type="EMBL" id="AE017349">
    <property type="protein sequence ID" value="AAW45607.1"/>
    <property type="molecule type" value="Genomic_DNA"/>
</dbReference>
<dbReference type="RefSeq" id="XP_572914.1">
    <property type="nucleotide sequence ID" value="XM_572914.2"/>
</dbReference>
<dbReference type="SMR" id="P0CS56"/>
<dbReference type="STRING" id="214684.P0CS56"/>
<dbReference type="PaxDb" id="214684-P0CS56"/>
<dbReference type="EnsemblFungi" id="AAW45607">
    <property type="protein sequence ID" value="AAW45607"/>
    <property type="gene ID" value="CNI03070"/>
</dbReference>
<dbReference type="GeneID" id="3259611"/>
<dbReference type="KEGG" id="cne:CNI03070"/>
<dbReference type="VEuPathDB" id="FungiDB:CNI03070"/>
<dbReference type="eggNOG" id="KOG4328">
    <property type="taxonomic scope" value="Eukaryota"/>
</dbReference>
<dbReference type="HOGENOM" id="CLU_017019_1_0_1"/>
<dbReference type="InParanoid" id="P0CS56"/>
<dbReference type="OMA" id="DPNTLYW"/>
<dbReference type="OrthoDB" id="9890280at2759"/>
<dbReference type="Proteomes" id="UP000002149">
    <property type="component" value="Chromosome 9"/>
</dbReference>
<dbReference type="GO" id="GO:0005634">
    <property type="term" value="C:nucleus"/>
    <property type="evidence" value="ECO:0000318"/>
    <property type="project" value="GO_Central"/>
</dbReference>
<dbReference type="GO" id="GO:0003677">
    <property type="term" value="F:DNA binding"/>
    <property type="evidence" value="ECO:0000318"/>
    <property type="project" value="GO_Central"/>
</dbReference>
<dbReference type="GO" id="GO:0006974">
    <property type="term" value="P:DNA damage response"/>
    <property type="evidence" value="ECO:0007669"/>
    <property type="project" value="UniProtKB-KW"/>
</dbReference>
<dbReference type="GO" id="GO:2000001">
    <property type="term" value="P:regulation of DNA damage checkpoint"/>
    <property type="evidence" value="ECO:0000318"/>
    <property type="project" value="GO_Central"/>
</dbReference>
<dbReference type="FunFam" id="2.130.10.10:FF:001808">
    <property type="entry name" value="DNA damage-binding protein CMR1"/>
    <property type="match status" value="1"/>
</dbReference>
<dbReference type="Gene3D" id="2.130.10.10">
    <property type="entry name" value="YVTN repeat-like/Quinoprotein amine dehydrogenase"/>
    <property type="match status" value="2"/>
</dbReference>
<dbReference type="InterPro" id="IPR015943">
    <property type="entry name" value="WD40/YVTN_repeat-like_dom_sf"/>
</dbReference>
<dbReference type="InterPro" id="IPR019775">
    <property type="entry name" value="WD40_repeat_CS"/>
</dbReference>
<dbReference type="InterPro" id="IPR036322">
    <property type="entry name" value="WD40_repeat_dom_sf"/>
</dbReference>
<dbReference type="InterPro" id="IPR001680">
    <property type="entry name" value="WD40_rpt"/>
</dbReference>
<dbReference type="InterPro" id="IPR050853">
    <property type="entry name" value="WD_repeat_DNA-damage-binding"/>
</dbReference>
<dbReference type="PANTHER" id="PTHR14773">
    <property type="entry name" value="WD REPEAT-CONTAINING PROTEIN 76"/>
    <property type="match status" value="1"/>
</dbReference>
<dbReference type="PANTHER" id="PTHR14773:SF0">
    <property type="entry name" value="WD REPEAT-CONTAINING PROTEIN 76"/>
    <property type="match status" value="1"/>
</dbReference>
<dbReference type="SMART" id="SM00320">
    <property type="entry name" value="WD40"/>
    <property type="match status" value="4"/>
</dbReference>
<dbReference type="SUPFAM" id="SSF50978">
    <property type="entry name" value="WD40 repeat-like"/>
    <property type="match status" value="1"/>
</dbReference>
<dbReference type="PROSITE" id="PS00678">
    <property type="entry name" value="WD_REPEATS_1"/>
    <property type="match status" value="1"/>
</dbReference>
<gene>
    <name type="ordered locus">CNI03070</name>
</gene>
<evidence type="ECO:0000250" key="1">
    <source>
        <dbReference type="UniProtKB" id="Q12510"/>
    </source>
</evidence>
<evidence type="ECO:0000255" key="2"/>
<evidence type="ECO:0000256" key="3">
    <source>
        <dbReference type="SAM" id="MobiDB-lite"/>
    </source>
</evidence>
<evidence type="ECO:0000305" key="4"/>